<protein>
    <recommendedName>
        <fullName evidence="1">UDP-N-acetylmuramoylalanine--D-glutamate ligase</fullName>
        <ecNumber evidence="1">6.3.2.9</ecNumber>
    </recommendedName>
    <alternativeName>
        <fullName evidence="1">D-glutamic acid-adding enzyme</fullName>
    </alternativeName>
    <alternativeName>
        <fullName evidence="1">UDP-N-acetylmuramoyl-L-alanyl-D-glutamate synthetase</fullName>
    </alternativeName>
</protein>
<feature type="chain" id="PRO_0000301429" description="UDP-N-acetylmuramoylalanine--D-glutamate ligase">
    <location>
        <begin position="1"/>
        <end position="459"/>
    </location>
</feature>
<feature type="binding site" evidence="1">
    <location>
        <begin position="119"/>
        <end position="125"/>
    </location>
    <ligand>
        <name>ATP</name>
        <dbReference type="ChEBI" id="CHEBI:30616"/>
    </ligand>
</feature>
<name>MURD_LACP3</name>
<keyword id="KW-0067">ATP-binding</keyword>
<keyword id="KW-0131">Cell cycle</keyword>
<keyword id="KW-0132">Cell division</keyword>
<keyword id="KW-0133">Cell shape</keyword>
<keyword id="KW-0961">Cell wall biogenesis/degradation</keyword>
<keyword id="KW-0963">Cytoplasm</keyword>
<keyword id="KW-0436">Ligase</keyword>
<keyword id="KW-0547">Nucleotide-binding</keyword>
<keyword id="KW-0573">Peptidoglycan synthesis</keyword>
<keyword id="KW-1185">Reference proteome</keyword>
<organism>
    <name type="scientific">Lacticaseibacillus paracasei (strain ATCC 334 / BCRC 17002 / CCUG 31169 / CIP 107868 / KCTC 3260 / NRRL B-441)</name>
    <name type="common">Lactobacillus paracasei</name>
    <dbReference type="NCBI Taxonomy" id="321967"/>
    <lineage>
        <taxon>Bacteria</taxon>
        <taxon>Bacillati</taxon>
        <taxon>Bacillota</taxon>
        <taxon>Bacilli</taxon>
        <taxon>Lactobacillales</taxon>
        <taxon>Lactobacillaceae</taxon>
        <taxon>Lacticaseibacillus</taxon>
    </lineage>
</organism>
<evidence type="ECO:0000255" key="1">
    <source>
        <dbReference type="HAMAP-Rule" id="MF_00639"/>
    </source>
</evidence>
<reference key="1">
    <citation type="journal article" date="2006" name="Proc. Natl. Acad. Sci. U.S.A.">
        <title>Comparative genomics of the lactic acid bacteria.</title>
        <authorList>
            <person name="Makarova K.S."/>
            <person name="Slesarev A."/>
            <person name="Wolf Y.I."/>
            <person name="Sorokin A."/>
            <person name="Mirkin B."/>
            <person name="Koonin E.V."/>
            <person name="Pavlov A."/>
            <person name="Pavlova N."/>
            <person name="Karamychev V."/>
            <person name="Polouchine N."/>
            <person name="Shakhova V."/>
            <person name="Grigoriev I."/>
            <person name="Lou Y."/>
            <person name="Rohksar D."/>
            <person name="Lucas S."/>
            <person name="Huang K."/>
            <person name="Goodstein D.M."/>
            <person name="Hawkins T."/>
            <person name="Plengvidhya V."/>
            <person name="Welker D."/>
            <person name="Hughes J."/>
            <person name="Goh Y."/>
            <person name="Benson A."/>
            <person name="Baldwin K."/>
            <person name="Lee J.-H."/>
            <person name="Diaz-Muniz I."/>
            <person name="Dosti B."/>
            <person name="Smeianov V."/>
            <person name="Wechter W."/>
            <person name="Barabote R."/>
            <person name="Lorca G."/>
            <person name="Altermann E."/>
            <person name="Barrangou R."/>
            <person name="Ganesan B."/>
            <person name="Xie Y."/>
            <person name="Rawsthorne H."/>
            <person name="Tamir D."/>
            <person name="Parker C."/>
            <person name="Breidt F."/>
            <person name="Broadbent J.R."/>
            <person name="Hutkins R."/>
            <person name="O'Sullivan D."/>
            <person name="Steele J."/>
            <person name="Unlu G."/>
            <person name="Saier M.H. Jr."/>
            <person name="Klaenhammer T."/>
            <person name="Richardson P."/>
            <person name="Kozyavkin S."/>
            <person name="Weimer B.C."/>
            <person name="Mills D.A."/>
        </authorList>
    </citation>
    <scope>NUCLEOTIDE SEQUENCE [LARGE SCALE GENOMIC DNA]</scope>
    <source>
        <strain>ATCC 334 / BCRC 17002 / CCUG 31169 / CIP 107868 / KCTC 3260 / NRRL B-441</strain>
    </source>
</reference>
<dbReference type="EC" id="6.3.2.9" evidence="1"/>
<dbReference type="EMBL" id="CP000423">
    <property type="protein sequence ID" value="ABJ70054.1"/>
    <property type="molecule type" value="Genomic_DNA"/>
</dbReference>
<dbReference type="RefSeq" id="WP_003565159.1">
    <property type="nucleotide sequence ID" value="NC_008526.1"/>
</dbReference>
<dbReference type="RefSeq" id="YP_806496.1">
    <property type="nucleotide sequence ID" value="NC_008526.1"/>
</dbReference>
<dbReference type="SMR" id="Q039R8"/>
<dbReference type="STRING" id="321967.LSEI_1271"/>
<dbReference type="PaxDb" id="321967-LSEI_1271"/>
<dbReference type="GeneID" id="57089949"/>
<dbReference type="KEGG" id="lca:LSEI_1271"/>
<dbReference type="PATRIC" id="fig|321967.11.peg.1247"/>
<dbReference type="HOGENOM" id="CLU_032540_0_1_9"/>
<dbReference type="UniPathway" id="UPA00219"/>
<dbReference type="Proteomes" id="UP000001651">
    <property type="component" value="Chromosome"/>
</dbReference>
<dbReference type="GO" id="GO:0005737">
    <property type="term" value="C:cytoplasm"/>
    <property type="evidence" value="ECO:0007669"/>
    <property type="project" value="UniProtKB-SubCell"/>
</dbReference>
<dbReference type="GO" id="GO:0005524">
    <property type="term" value="F:ATP binding"/>
    <property type="evidence" value="ECO:0007669"/>
    <property type="project" value="UniProtKB-UniRule"/>
</dbReference>
<dbReference type="GO" id="GO:0008764">
    <property type="term" value="F:UDP-N-acetylmuramoylalanine-D-glutamate ligase activity"/>
    <property type="evidence" value="ECO:0007669"/>
    <property type="project" value="UniProtKB-UniRule"/>
</dbReference>
<dbReference type="GO" id="GO:0051301">
    <property type="term" value="P:cell division"/>
    <property type="evidence" value="ECO:0007669"/>
    <property type="project" value="UniProtKB-KW"/>
</dbReference>
<dbReference type="GO" id="GO:0071555">
    <property type="term" value="P:cell wall organization"/>
    <property type="evidence" value="ECO:0007669"/>
    <property type="project" value="UniProtKB-KW"/>
</dbReference>
<dbReference type="GO" id="GO:0009252">
    <property type="term" value="P:peptidoglycan biosynthetic process"/>
    <property type="evidence" value="ECO:0007669"/>
    <property type="project" value="UniProtKB-UniRule"/>
</dbReference>
<dbReference type="GO" id="GO:0008360">
    <property type="term" value="P:regulation of cell shape"/>
    <property type="evidence" value="ECO:0007669"/>
    <property type="project" value="UniProtKB-KW"/>
</dbReference>
<dbReference type="Gene3D" id="3.90.190.20">
    <property type="entry name" value="Mur ligase, C-terminal domain"/>
    <property type="match status" value="1"/>
</dbReference>
<dbReference type="Gene3D" id="3.40.1190.10">
    <property type="entry name" value="Mur-like, catalytic domain"/>
    <property type="match status" value="1"/>
</dbReference>
<dbReference type="Gene3D" id="3.40.50.720">
    <property type="entry name" value="NAD(P)-binding Rossmann-like Domain"/>
    <property type="match status" value="1"/>
</dbReference>
<dbReference type="HAMAP" id="MF_00639">
    <property type="entry name" value="MurD"/>
    <property type="match status" value="1"/>
</dbReference>
<dbReference type="InterPro" id="IPR036565">
    <property type="entry name" value="Mur-like_cat_sf"/>
</dbReference>
<dbReference type="InterPro" id="IPR004101">
    <property type="entry name" value="Mur_ligase_C"/>
</dbReference>
<dbReference type="InterPro" id="IPR036615">
    <property type="entry name" value="Mur_ligase_C_dom_sf"/>
</dbReference>
<dbReference type="InterPro" id="IPR013221">
    <property type="entry name" value="Mur_ligase_cen"/>
</dbReference>
<dbReference type="InterPro" id="IPR005762">
    <property type="entry name" value="MurD"/>
</dbReference>
<dbReference type="NCBIfam" id="TIGR01087">
    <property type="entry name" value="murD"/>
    <property type="match status" value="1"/>
</dbReference>
<dbReference type="PANTHER" id="PTHR43692">
    <property type="entry name" value="UDP-N-ACETYLMURAMOYLALANINE--D-GLUTAMATE LIGASE"/>
    <property type="match status" value="1"/>
</dbReference>
<dbReference type="PANTHER" id="PTHR43692:SF1">
    <property type="entry name" value="UDP-N-ACETYLMURAMOYLALANINE--D-GLUTAMATE LIGASE"/>
    <property type="match status" value="1"/>
</dbReference>
<dbReference type="Pfam" id="PF02875">
    <property type="entry name" value="Mur_ligase_C"/>
    <property type="match status" value="1"/>
</dbReference>
<dbReference type="Pfam" id="PF08245">
    <property type="entry name" value="Mur_ligase_M"/>
    <property type="match status" value="1"/>
</dbReference>
<dbReference type="Pfam" id="PF21799">
    <property type="entry name" value="MurD-like_N"/>
    <property type="match status" value="1"/>
</dbReference>
<dbReference type="SUPFAM" id="SSF51984">
    <property type="entry name" value="MurCD N-terminal domain"/>
    <property type="match status" value="1"/>
</dbReference>
<dbReference type="SUPFAM" id="SSF53623">
    <property type="entry name" value="MurD-like peptide ligases, catalytic domain"/>
    <property type="match status" value="1"/>
</dbReference>
<dbReference type="SUPFAM" id="SSF53244">
    <property type="entry name" value="MurD-like peptide ligases, peptide-binding domain"/>
    <property type="match status" value="1"/>
</dbReference>
<accession>Q039R8</accession>
<gene>
    <name evidence="1" type="primary">murD</name>
    <name type="ordered locus">LSEI_1271</name>
</gene>
<proteinExistence type="inferred from homology"/>
<sequence length="459" mass="50490">MKNISDYRNKKVLVLGLAKSGVNAARLLHKLGALVTVNDKQQFDDNKDAQELLADGMRVITGRHPVELLDEHFELMVKNPGIPYSNPMVKRAEALHMPIITEPELAYQVSEAQWIGITGTNGKTTTTTLIGLMLNQQRPHHAFDAGNIGIPVSQVAQKVGKDDTIVAELSSFQLCGIKTLHPHIAVLTNIYEAHLDWHGNRANYVAAKMRITMNQTPDDYFIMNWDLPEMHELAKQSKAQIVPFSRKNAEGARAQLIDGWLTFDGDRIMKASEMQIPGLHNIENALAAIAAVKLEGVGDDAIREVLRTFSGVKHRIQYLETIDGRRVYNDSKATNVEAATVALNAFDQPIVWLAGGLDRGLPMDALTPLVKKHVKSMVVFGQTAPLMAKIAKDAGVPVQTTENVMTAVPLAYEVSRPGDVILLSPAAASWDQYPNFEVRGDDFIKAVNQLKATVESGDK</sequence>
<comment type="function">
    <text evidence="1">Cell wall formation. Catalyzes the addition of glutamate to the nucleotide precursor UDP-N-acetylmuramoyl-L-alanine (UMA).</text>
</comment>
<comment type="catalytic activity">
    <reaction evidence="1">
        <text>UDP-N-acetyl-alpha-D-muramoyl-L-alanine + D-glutamate + ATP = UDP-N-acetyl-alpha-D-muramoyl-L-alanyl-D-glutamate + ADP + phosphate + H(+)</text>
        <dbReference type="Rhea" id="RHEA:16429"/>
        <dbReference type="ChEBI" id="CHEBI:15378"/>
        <dbReference type="ChEBI" id="CHEBI:29986"/>
        <dbReference type="ChEBI" id="CHEBI:30616"/>
        <dbReference type="ChEBI" id="CHEBI:43474"/>
        <dbReference type="ChEBI" id="CHEBI:83898"/>
        <dbReference type="ChEBI" id="CHEBI:83900"/>
        <dbReference type="ChEBI" id="CHEBI:456216"/>
        <dbReference type="EC" id="6.3.2.9"/>
    </reaction>
</comment>
<comment type="pathway">
    <text evidence="1">Cell wall biogenesis; peptidoglycan biosynthesis.</text>
</comment>
<comment type="subcellular location">
    <subcellularLocation>
        <location evidence="1">Cytoplasm</location>
    </subcellularLocation>
</comment>
<comment type="similarity">
    <text evidence="1">Belongs to the MurCDEF family.</text>
</comment>